<dbReference type="EMBL" id="CP000001">
    <property type="protein sequence ID" value="AAU20266.1"/>
    <property type="molecule type" value="Genomic_DNA"/>
</dbReference>
<dbReference type="RefSeq" id="WP_000104901.1">
    <property type="nucleotide sequence ID" value="NZ_CP009968.1"/>
</dbReference>
<dbReference type="SMR" id="Q630G3"/>
<dbReference type="GeneID" id="93005686"/>
<dbReference type="KEGG" id="bcz:BCE33L5136"/>
<dbReference type="PATRIC" id="fig|288681.22.peg.205"/>
<dbReference type="Proteomes" id="UP000002612">
    <property type="component" value="Chromosome"/>
</dbReference>
<dbReference type="GO" id="GO:0005886">
    <property type="term" value="C:plasma membrane"/>
    <property type="evidence" value="ECO:0007669"/>
    <property type="project" value="UniProtKB-SubCell"/>
</dbReference>
<dbReference type="GO" id="GO:0019835">
    <property type="term" value="P:cytolysis"/>
    <property type="evidence" value="ECO:0007669"/>
    <property type="project" value="UniProtKB-UniRule"/>
</dbReference>
<dbReference type="GO" id="GO:0031640">
    <property type="term" value="P:killing of cells of another organism"/>
    <property type="evidence" value="ECO:0007669"/>
    <property type="project" value="UniProtKB-KW"/>
</dbReference>
<dbReference type="GO" id="GO:0012501">
    <property type="term" value="P:programmed cell death"/>
    <property type="evidence" value="ECO:0007669"/>
    <property type="project" value="UniProtKB-UniRule"/>
</dbReference>
<dbReference type="HAMAP" id="MF_01141">
    <property type="entry name" value="LrgA"/>
    <property type="match status" value="1"/>
</dbReference>
<dbReference type="InterPro" id="IPR023736">
    <property type="entry name" value="Antiholin-like_LrgA"/>
</dbReference>
<dbReference type="InterPro" id="IPR005538">
    <property type="entry name" value="LrgA/CidA"/>
</dbReference>
<dbReference type="NCBIfam" id="NF003155">
    <property type="entry name" value="PRK04125.1"/>
    <property type="match status" value="1"/>
</dbReference>
<dbReference type="PANTHER" id="PTHR33931:SF4">
    <property type="entry name" value="ANTIHOLIN-LIKE PROTEIN LRGA"/>
    <property type="match status" value="1"/>
</dbReference>
<dbReference type="PANTHER" id="PTHR33931">
    <property type="entry name" value="HOLIN-LIKE PROTEIN CIDA-RELATED"/>
    <property type="match status" value="1"/>
</dbReference>
<dbReference type="Pfam" id="PF03788">
    <property type="entry name" value="LrgA"/>
    <property type="match status" value="1"/>
</dbReference>
<gene>
    <name evidence="1" type="primary">lrgA</name>
    <name type="ordered locus">BCE33L5136</name>
</gene>
<name>LRGA_BACCZ</name>
<sequence length="143" mass="15424">MSTKKVYSFLSQAFIFSAIMLISNIIATHLPIPMPSSVIGLVILFSLLCLKVIKLEQVESLGTALTGIIGFLFVPSGISVINSLGVMGQYFVQILTVIVVATVILLAVTGLFAQFILGKDEKETEDTKELKVVNKGRKHGKVA</sequence>
<keyword id="KW-1003">Cell membrane</keyword>
<keyword id="KW-0204">Cytolysis</keyword>
<keyword id="KW-0472">Membrane</keyword>
<keyword id="KW-0812">Transmembrane</keyword>
<keyword id="KW-1133">Transmembrane helix</keyword>
<proteinExistence type="inferred from homology"/>
<evidence type="ECO:0000255" key="1">
    <source>
        <dbReference type="HAMAP-Rule" id="MF_01141"/>
    </source>
</evidence>
<organism>
    <name type="scientific">Bacillus cereus (strain ZK / E33L)</name>
    <dbReference type="NCBI Taxonomy" id="288681"/>
    <lineage>
        <taxon>Bacteria</taxon>
        <taxon>Bacillati</taxon>
        <taxon>Bacillota</taxon>
        <taxon>Bacilli</taxon>
        <taxon>Bacillales</taxon>
        <taxon>Bacillaceae</taxon>
        <taxon>Bacillus</taxon>
        <taxon>Bacillus cereus group</taxon>
    </lineage>
</organism>
<reference key="1">
    <citation type="journal article" date="2006" name="J. Bacteriol.">
        <title>Pathogenomic sequence analysis of Bacillus cereus and Bacillus thuringiensis isolates closely related to Bacillus anthracis.</title>
        <authorList>
            <person name="Han C.S."/>
            <person name="Xie G."/>
            <person name="Challacombe J.F."/>
            <person name="Altherr M.R."/>
            <person name="Bhotika S.S."/>
            <person name="Bruce D."/>
            <person name="Campbell C.S."/>
            <person name="Campbell M.L."/>
            <person name="Chen J."/>
            <person name="Chertkov O."/>
            <person name="Cleland C."/>
            <person name="Dimitrijevic M."/>
            <person name="Doggett N.A."/>
            <person name="Fawcett J.J."/>
            <person name="Glavina T."/>
            <person name="Goodwin L.A."/>
            <person name="Hill K.K."/>
            <person name="Hitchcock P."/>
            <person name="Jackson P.J."/>
            <person name="Keim P."/>
            <person name="Kewalramani A.R."/>
            <person name="Longmire J."/>
            <person name="Lucas S."/>
            <person name="Malfatti S."/>
            <person name="McMurry K."/>
            <person name="Meincke L.J."/>
            <person name="Misra M."/>
            <person name="Moseman B.L."/>
            <person name="Mundt M."/>
            <person name="Munk A.C."/>
            <person name="Okinaka R.T."/>
            <person name="Parson-Quintana B."/>
            <person name="Reilly L.P."/>
            <person name="Richardson P."/>
            <person name="Robinson D.L."/>
            <person name="Rubin E."/>
            <person name="Saunders E."/>
            <person name="Tapia R."/>
            <person name="Tesmer J.G."/>
            <person name="Thayer N."/>
            <person name="Thompson L.S."/>
            <person name="Tice H."/>
            <person name="Ticknor L.O."/>
            <person name="Wills P.L."/>
            <person name="Brettin T.S."/>
            <person name="Gilna P."/>
        </authorList>
    </citation>
    <scope>NUCLEOTIDE SEQUENCE [LARGE SCALE GENOMIC DNA]</scope>
    <source>
        <strain>ZK / E33L</strain>
    </source>
</reference>
<comment type="function">
    <text evidence="1">Inhibits the expression or activity of extracellular murein hydrolases by interacting, possibly with LrgB, with the holin-like protein CidA. The LrgAB and CidA proteins may affect the proton motive force of the membrane. May be involved in programmed cell death (PCD), possibly triggering PCD in response to antibiotics and environmental stresses.</text>
</comment>
<comment type="subcellular location">
    <subcellularLocation>
        <location evidence="1">Cell membrane</location>
        <topology evidence="1">Multi-pass membrane protein</topology>
    </subcellularLocation>
</comment>
<comment type="similarity">
    <text evidence="1">Belongs to the CidA/LrgA family. LrgA subfamily.</text>
</comment>
<accession>Q630G3</accession>
<protein>
    <recommendedName>
        <fullName evidence="1">Antiholin-like protein LrgA</fullName>
    </recommendedName>
</protein>
<feature type="chain" id="PRO_1000065434" description="Antiholin-like protein LrgA">
    <location>
        <begin position="1"/>
        <end position="143"/>
    </location>
</feature>
<feature type="transmembrane region" description="Helical" evidence="1">
    <location>
        <begin position="6"/>
        <end position="26"/>
    </location>
</feature>
<feature type="transmembrane region" description="Helical" evidence="1">
    <location>
        <begin position="30"/>
        <end position="50"/>
    </location>
</feature>
<feature type="transmembrane region" description="Helical" evidence="1">
    <location>
        <begin position="61"/>
        <end position="81"/>
    </location>
</feature>
<feature type="transmembrane region" description="Helical" evidence="1">
    <location>
        <begin position="97"/>
        <end position="117"/>
    </location>
</feature>